<evidence type="ECO:0000250" key="1"/>
<evidence type="ECO:0000305" key="2"/>
<sequence length="291" mass="32580">MSPVKVFGHPMLTNVARVLLFLEEVGAEYELVPVDFVAGEHKRPQHVQLNPFAKMPGFQDGESLHIKSRAIAKYILRKYGGTAGLDLLGENSGIEELAMVDVWTEVEAQQYYPAISPVVFECIIIPFIIPGGGAAPNQTVVDESLERLRGVLGIYEARLEKSRYLAGDSISFADLNHIPFTFYFMTTPYAKVFDEYPKVKAWWEMLMARPAVQRVCKHMPTEFKLRARTRCLCTPRGCVPCRAGDDPTQEKRPPSRGWVIICPSTSSIPFQFQQHEESACASARASPDSLL</sequence>
<proteinExistence type="inferred from homology"/>
<feature type="chain" id="PRO_0000185859" description="Glutathione S-transferase 2">
    <location>
        <begin position="1"/>
        <end position="291"/>
    </location>
</feature>
<feature type="domain" description="GST N-terminal">
    <location>
        <begin position="2"/>
        <end position="83"/>
    </location>
</feature>
<feature type="domain" description="GST C-terminal">
    <location>
        <begin position="93"/>
        <end position="223"/>
    </location>
</feature>
<feature type="binding site" evidence="1">
    <location>
        <begin position="41"/>
        <end position="42"/>
    </location>
    <ligand>
        <name>glutathione</name>
        <dbReference type="ChEBI" id="CHEBI:57925"/>
    </ligand>
</feature>
<feature type="binding site" evidence="1">
    <location>
        <begin position="54"/>
        <end position="55"/>
    </location>
    <ligand>
        <name>glutathione</name>
        <dbReference type="ChEBI" id="CHEBI:57925"/>
    </ligand>
</feature>
<feature type="binding site" evidence="1">
    <location>
        <begin position="67"/>
        <end position="68"/>
    </location>
    <ligand>
        <name>glutathione</name>
        <dbReference type="ChEBI" id="CHEBI:57925"/>
    </ligand>
</feature>
<dbReference type="EC" id="2.5.1.18"/>
<dbReference type="EMBL" id="X56004">
    <property type="protein sequence ID" value="CAA39480.1"/>
    <property type="molecule type" value="Genomic_DNA"/>
</dbReference>
<dbReference type="PIR" id="T06510">
    <property type="entry name" value="T06510"/>
</dbReference>
<dbReference type="SMR" id="P30111"/>
<dbReference type="STRING" id="4565.P30111"/>
<dbReference type="EnsemblPlants" id="TraesARI4B03G02281120.2">
    <property type="protein sequence ID" value="TraesARI4B03G02281120.2"/>
    <property type="gene ID" value="TraesARI4B03G02281120"/>
</dbReference>
<dbReference type="EnsemblPlants" id="TraesCAD_scaffold_011049_01G000200.1">
    <property type="protein sequence ID" value="TraesCAD_scaffold_011049_01G000200.1"/>
    <property type="gene ID" value="TraesCAD_scaffold_011049_01G000200"/>
</dbReference>
<dbReference type="EnsemblPlants" id="TraesCLE_scaffold_048613_01G000200.1">
    <property type="protein sequence ID" value="TraesCLE_scaffold_048613_01G000200.1"/>
    <property type="gene ID" value="TraesCLE_scaffold_048613_01G000200"/>
</dbReference>
<dbReference type="EnsemblPlants" id="TraesCS4B02G059100.1">
    <property type="protein sequence ID" value="TraesCS4B02G059100.1"/>
    <property type="gene ID" value="TraesCS4B02G059100"/>
</dbReference>
<dbReference type="EnsemblPlants" id="TraesCS4B03G0128200.1">
    <property type="protein sequence ID" value="TraesCS4B03G0128200.1.CDS"/>
    <property type="gene ID" value="TraesCS4B03G0128200"/>
</dbReference>
<dbReference type="EnsemblPlants" id="TraesJAG4B03G02243940.1">
    <property type="protein sequence ID" value="TraesJAG4B03G02243940.1"/>
    <property type="gene ID" value="TraesJAG4B03G02243940"/>
</dbReference>
<dbReference type="EnsemblPlants" id="TraesJUL4B03G02265310.2">
    <property type="protein sequence ID" value="TraesJUL4B03G02265310.2"/>
    <property type="gene ID" value="TraesJUL4B03G02265310"/>
</dbReference>
<dbReference type="EnsemblPlants" id="TraesLAC4B03G02198140.2">
    <property type="protein sequence ID" value="TraesLAC4B03G02198140.2"/>
    <property type="gene ID" value="TraesLAC4B03G02198140"/>
</dbReference>
<dbReference type="EnsemblPlants" id="TraesLDM4B03G02244240.1">
    <property type="protein sequence ID" value="TraesLDM4B03G02244240.1"/>
    <property type="gene ID" value="TraesLDM4B03G02244240"/>
</dbReference>
<dbReference type="EnsemblPlants" id="TraesMAC4B03G02243810.2">
    <property type="protein sequence ID" value="TraesMAC4B03G02243810.2"/>
    <property type="gene ID" value="TraesMAC4B03G02243810"/>
</dbReference>
<dbReference type="EnsemblPlants" id="TraesNOR4B03G02261510.2">
    <property type="protein sequence ID" value="TraesNOR4B03G02261510.2"/>
    <property type="gene ID" value="TraesNOR4B03G02261510"/>
</dbReference>
<dbReference type="EnsemblPlants" id="TraesPARA_EIv1.0_1319500.2">
    <property type="protein sequence ID" value="TraesPARA_EIv1.0_1319500.2.CDS"/>
    <property type="gene ID" value="TraesPARA_EIv1.0_1319500"/>
</dbReference>
<dbReference type="EnsemblPlants" id="TraesRN4B0100133100.1">
    <property type="protein sequence ID" value="TraesRN4B0100133100.1"/>
    <property type="gene ID" value="TraesRN4B0100133100"/>
</dbReference>
<dbReference type="EnsemblPlants" id="TraesROB_scaffold_036282_01G000200.1">
    <property type="protein sequence ID" value="TraesROB_scaffold_036282_01G000200.1"/>
    <property type="gene ID" value="TraesROB_scaffold_036282_01G000200"/>
</dbReference>
<dbReference type="EnsemblPlants" id="TraesSTA4B03G02239480.2">
    <property type="protein sequence ID" value="TraesSTA4B03G02239480.2"/>
    <property type="gene ID" value="TraesSTA4B03G02239480"/>
</dbReference>
<dbReference type="EnsemblPlants" id="TraesSYM4B03G02270750.2">
    <property type="protein sequence ID" value="TraesSYM4B03G02270750.2"/>
    <property type="gene ID" value="TraesSYM4B03G02270750"/>
</dbReference>
<dbReference type="EnsemblPlants" id="TraesWEE_scaffold_065188_01G000200.1">
    <property type="protein sequence ID" value="TraesWEE_scaffold_065188_01G000200.1"/>
    <property type="gene ID" value="TraesWEE_scaffold_065188_01G000200"/>
</dbReference>
<dbReference type="Gramene" id="TraesARI4B03G02281120.2">
    <property type="protein sequence ID" value="TraesARI4B03G02281120.2"/>
    <property type="gene ID" value="TraesARI4B03G02281120"/>
</dbReference>
<dbReference type="Gramene" id="TraesCAD_scaffold_011049_01G000200.1">
    <property type="protein sequence ID" value="TraesCAD_scaffold_011049_01G000200.1"/>
    <property type="gene ID" value="TraesCAD_scaffold_011049_01G000200"/>
</dbReference>
<dbReference type="Gramene" id="TraesCLE_scaffold_048613_01G000200.1">
    <property type="protein sequence ID" value="TraesCLE_scaffold_048613_01G000200.1"/>
    <property type="gene ID" value="TraesCLE_scaffold_048613_01G000200"/>
</dbReference>
<dbReference type="Gramene" id="TraesCS4B02G059100.1">
    <property type="protein sequence ID" value="TraesCS4B02G059100.1"/>
    <property type="gene ID" value="TraesCS4B02G059100"/>
</dbReference>
<dbReference type="Gramene" id="TraesCS4B03G0128200.1">
    <property type="protein sequence ID" value="TraesCS4B03G0128200.1.CDS"/>
    <property type="gene ID" value="TraesCS4B03G0128200"/>
</dbReference>
<dbReference type="Gramene" id="TraesJAG4B03G02243940.1">
    <property type="protein sequence ID" value="TraesJAG4B03G02243940.1"/>
    <property type="gene ID" value="TraesJAG4B03G02243940"/>
</dbReference>
<dbReference type="Gramene" id="TraesJUL4B03G02265310.2">
    <property type="protein sequence ID" value="TraesJUL4B03G02265310.2"/>
    <property type="gene ID" value="TraesJUL4B03G02265310"/>
</dbReference>
<dbReference type="Gramene" id="TraesLAC4B03G02198140.2">
    <property type="protein sequence ID" value="TraesLAC4B03G02198140.2"/>
    <property type="gene ID" value="TraesLAC4B03G02198140"/>
</dbReference>
<dbReference type="Gramene" id="TraesLDM4B03G02244240.1">
    <property type="protein sequence ID" value="TraesLDM4B03G02244240.1"/>
    <property type="gene ID" value="TraesLDM4B03G02244240"/>
</dbReference>
<dbReference type="Gramene" id="TraesMAC4B03G02243810.2">
    <property type="protein sequence ID" value="TraesMAC4B03G02243810.2"/>
    <property type="gene ID" value="TraesMAC4B03G02243810"/>
</dbReference>
<dbReference type="Gramene" id="TraesNOR4B03G02261510.2">
    <property type="protein sequence ID" value="TraesNOR4B03G02261510.2"/>
    <property type="gene ID" value="TraesNOR4B03G02261510"/>
</dbReference>
<dbReference type="Gramene" id="TraesPARA_EIv1.0_1319500.2">
    <property type="protein sequence ID" value="TraesPARA_EIv1.0_1319500.2.CDS"/>
    <property type="gene ID" value="TraesPARA_EIv1.0_1319500"/>
</dbReference>
<dbReference type="Gramene" id="TraesRN4B0100133100.1">
    <property type="protein sequence ID" value="TraesRN4B0100133100.1"/>
    <property type="gene ID" value="TraesRN4B0100133100"/>
</dbReference>
<dbReference type="Gramene" id="TraesROB_scaffold_036282_01G000200.1">
    <property type="protein sequence ID" value="TraesROB_scaffold_036282_01G000200.1"/>
    <property type="gene ID" value="TraesROB_scaffold_036282_01G000200"/>
</dbReference>
<dbReference type="Gramene" id="TraesSTA4B03G02239480.2">
    <property type="protein sequence ID" value="TraesSTA4B03G02239480.2"/>
    <property type="gene ID" value="TraesSTA4B03G02239480"/>
</dbReference>
<dbReference type="Gramene" id="TraesSYM4B03G02270750.2">
    <property type="protein sequence ID" value="TraesSYM4B03G02270750.2"/>
    <property type="gene ID" value="TraesSYM4B03G02270750"/>
</dbReference>
<dbReference type="Gramene" id="TraesWEE_scaffold_065188_01G000200.1">
    <property type="protein sequence ID" value="TraesWEE_scaffold_065188_01G000200.1"/>
    <property type="gene ID" value="TraesWEE_scaffold_065188_01G000200"/>
</dbReference>
<dbReference type="BRENDA" id="2.5.1.18">
    <property type="organism ID" value="6500"/>
</dbReference>
<dbReference type="Proteomes" id="UP000019116">
    <property type="component" value="Chromosome 4B"/>
</dbReference>
<dbReference type="ExpressionAtlas" id="P30111">
    <property type="expression patterns" value="baseline and differential"/>
</dbReference>
<dbReference type="GO" id="GO:0005737">
    <property type="term" value="C:cytoplasm"/>
    <property type="evidence" value="ECO:0000318"/>
    <property type="project" value="GO_Central"/>
</dbReference>
<dbReference type="GO" id="GO:0043295">
    <property type="term" value="F:glutathione binding"/>
    <property type="evidence" value="ECO:0000318"/>
    <property type="project" value="GO_Central"/>
</dbReference>
<dbReference type="GO" id="GO:0004364">
    <property type="term" value="F:glutathione transferase activity"/>
    <property type="evidence" value="ECO:0000318"/>
    <property type="project" value="GO_Central"/>
</dbReference>
<dbReference type="GO" id="GO:0006749">
    <property type="term" value="P:glutathione metabolic process"/>
    <property type="evidence" value="ECO:0000318"/>
    <property type="project" value="GO_Central"/>
</dbReference>
<dbReference type="GO" id="GO:0009636">
    <property type="term" value="P:response to toxic substance"/>
    <property type="evidence" value="ECO:0007669"/>
    <property type="project" value="UniProtKB-ARBA"/>
</dbReference>
<dbReference type="CDD" id="cd03187">
    <property type="entry name" value="GST_C_Phi"/>
    <property type="match status" value="1"/>
</dbReference>
<dbReference type="FunFam" id="1.20.1050.10:FF:000004">
    <property type="entry name" value="Glutathione S-transferase F2"/>
    <property type="match status" value="1"/>
</dbReference>
<dbReference type="FunFam" id="3.40.30.10:FF:000016">
    <property type="entry name" value="Glutathione S-transferase F2"/>
    <property type="match status" value="1"/>
</dbReference>
<dbReference type="Gene3D" id="1.20.1050.10">
    <property type="match status" value="1"/>
</dbReference>
<dbReference type="Gene3D" id="3.40.30.10">
    <property type="entry name" value="Glutaredoxin"/>
    <property type="match status" value="1"/>
</dbReference>
<dbReference type="InterPro" id="IPR010987">
    <property type="entry name" value="Glutathione-S-Trfase_C-like"/>
</dbReference>
<dbReference type="InterPro" id="IPR036282">
    <property type="entry name" value="Glutathione-S-Trfase_C_sf"/>
</dbReference>
<dbReference type="InterPro" id="IPR040079">
    <property type="entry name" value="Glutathione_S-Trfase"/>
</dbReference>
<dbReference type="InterPro" id="IPR004045">
    <property type="entry name" value="Glutathione_S-Trfase_N"/>
</dbReference>
<dbReference type="InterPro" id="IPR004046">
    <property type="entry name" value="GST_C"/>
</dbReference>
<dbReference type="InterPro" id="IPR034347">
    <property type="entry name" value="GST_Phi_C"/>
</dbReference>
<dbReference type="InterPro" id="IPR036249">
    <property type="entry name" value="Thioredoxin-like_sf"/>
</dbReference>
<dbReference type="PANTHER" id="PTHR43900:SF76">
    <property type="entry name" value="GLUTATHIONE S-TRANSFERASE 1"/>
    <property type="match status" value="1"/>
</dbReference>
<dbReference type="PANTHER" id="PTHR43900">
    <property type="entry name" value="GLUTATHIONE S-TRANSFERASE RHO"/>
    <property type="match status" value="1"/>
</dbReference>
<dbReference type="Pfam" id="PF00043">
    <property type="entry name" value="GST_C"/>
    <property type="match status" value="1"/>
</dbReference>
<dbReference type="Pfam" id="PF02798">
    <property type="entry name" value="GST_N"/>
    <property type="match status" value="1"/>
</dbReference>
<dbReference type="SFLD" id="SFLDS00019">
    <property type="entry name" value="Glutathione_Transferase_(cytos"/>
    <property type="match status" value="1"/>
</dbReference>
<dbReference type="SFLD" id="SFLDG00358">
    <property type="entry name" value="Main_(cytGST)"/>
    <property type="match status" value="1"/>
</dbReference>
<dbReference type="SUPFAM" id="SSF47616">
    <property type="entry name" value="GST C-terminal domain-like"/>
    <property type="match status" value="1"/>
</dbReference>
<dbReference type="SUPFAM" id="SSF52833">
    <property type="entry name" value="Thioredoxin-like"/>
    <property type="match status" value="1"/>
</dbReference>
<dbReference type="PROSITE" id="PS50405">
    <property type="entry name" value="GST_CTER"/>
    <property type="match status" value="1"/>
</dbReference>
<dbReference type="PROSITE" id="PS50404">
    <property type="entry name" value="GST_NTER"/>
    <property type="match status" value="1"/>
</dbReference>
<keyword id="KW-1185">Reference proteome</keyword>
<keyword id="KW-0808">Transferase</keyword>
<name>GSTF2_WHEAT</name>
<organism>
    <name type="scientific">Triticum aestivum</name>
    <name type="common">Wheat</name>
    <dbReference type="NCBI Taxonomy" id="4565"/>
    <lineage>
        <taxon>Eukaryota</taxon>
        <taxon>Viridiplantae</taxon>
        <taxon>Streptophyta</taxon>
        <taxon>Embryophyta</taxon>
        <taxon>Tracheophyta</taxon>
        <taxon>Spermatophyta</taxon>
        <taxon>Magnoliopsida</taxon>
        <taxon>Liliopsida</taxon>
        <taxon>Poales</taxon>
        <taxon>Poaceae</taxon>
        <taxon>BOP clade</taxon>
        <taxon>Pooideae</taxon>
        <taxon>Triticodae</taxon>
        <taxon>Triticeae</taxon>
        <taxon>Triticinae</taxon>
        <taxon>Triticum</taxon>
    </lineage>
</organism>
<reference key="1">
    <citation type="journal article" date="1991" name="Plant Mol. Biol.">
        <title>A wheat glutathione-S-transferase gene with transposon-like sequences in the promoter region.</title>
        <authorList>
            <person name="Mauch F."/>
            <person name="Hertig C."/>
            <person name="Rebmann G."/>
            <person name="Bull J."/>
            <person name="Dudler R."/>
        </authorList>
    </citation>
    <scope>NUCLEOTIDE SEQUENCE [GENOMIC DNA]</scope>
    <source>
        <strain>cv. Cheyenne</strain>
    </source>
</reference>
<protein>
    <recommendedName>
        <fullName>Glutathione S-transferase 2</fullName>
        <ecNumber>2.5.1.18</ecNumber>
    </recommendedName>
    <alternativeName>
        <fullName>GST class-phi</fullName>
    </alternativeName>
</protein>
<accession>P30111</accession>
<comment type="function">
    <text>Conjugation of reduced glutathione to a wide number of exogenous and endogenous hydrophobic electrophiles.</text>
</comment>
<comment type="catalytic activity">
    <reaction>
        <text>RX + glutathione = an S-substituted glutathione + a halide anion + H(+)</text>
        <dbReference type="Rhea" id="RHEA:16437"/>
        <dbReference type="ChEBI" id="CHEBI:15378"/>
        <dbReference type="ChEBI" id="CHEBI:16042"/>
        <dbReference type="ChEBI" id="CHEBI:17792"/>
        <dbReference type="ChEBI" id="CHEBI:57925"/>
        <dbReference type="ChEBI" id="CHEBI:90779"/>
        <dbReference type="EC" id="2.5.1.18"/>
    </reaction>
</comment>
<comment type="miscellaneous">
    <text>GSTA2 is said to be a defective gene.</text>
</comment>
<comment type="similarity">
    <text evidence="2">Belongs to the GST superfamily. Phi family.</text>
</comment>
<gene>
    <name type="primary">GSTA2</name>
</gene>